<name>M3K7_RAT</name>
<gene>
    <name type="primary">Map3k7</name>
</gene>
<accession>P0C8E4</accession>
<protein>
    <recommendedName>
        <fullName>Mitogen-activated protein kinase kinase kinase 7</fullName>
        <ecNumber evidence="2">2.7.11.25</ecNumber>
    </recommendedName>
</protein>
<reference key="1">
    <citation type="journal article" date="2004" name="Nature">
        <title>Genome sequence of the Brown Norway rat yields insights into mammalian evolution.</title>
        <authorList>
            <person name="Gibbs R.A."/>
            <person name="Weinstock G.M."/>
            <person name="Metzker M.L."/>
            <person name="Muzny D.M."/>
            <person name="Sodergren E.J."/>
            <person name="Scherer S."/>
            <person name="Scott G."/>
            <person name="Steffen D."/>
            <person name="Worley K.C."/>
            <person name="Burch P.E."/>
            <person name="Okwuonu G."/>
            <person name="Hines S."/>
            <person name="Lewis L."/>
            <person name="Deramo C."/>
            <person name="Delgado O."/>
            <person name="Dugan-Rocha S."/>
            <person name="Miner G."/>
            <person name="Morgan M."/>
            <person name="Hawes A."/>
            <person name="Gill R."/>
            <person name="Holt R.A."/>
            <person name="Adams M.D."/>
            <person name="Amanatides P.G."/>
            <person name="Baden-Tillson H."/>
            <person name="Barnstead M."/>
            <person name="Chin S."/>
            <person name="Evans C.A."/>
            <person name="Ferriera S."/>
            <person name="Fosler C."/>
            <person name="Glodek A."/>
            <person name="Gu Z."/>
            <person name="Jennings D."/>
            <person name="Kraft C.L."/>
            <person name="Nguyen T."/>
            <person name="Pfannkoch C.M."/>
            <person name="Sitter C."/>
            <person name="Sutton G.G."/>
            <person name="Venter J.C."/>
            <person name="Woodage T."/>
            <person name="Smith D."/>
            <person name="Lee H.-M."/>
            <person name="Gustafson E."/>
            <person name="Cahill P."/>
            <person name="Kana A."/>
            <person name="Doucette-Stamm L."/>
            <person name="Weinstock K."/>
            <person name="Fechtel K."/>
            <person name="Weiss R.B."/>
            <person name="Dunn D.M."/>
            <person name="Green E.D."/>
            <person name="Blakesley R.W."/>
            <person name="Bouffard G.G."/>
            <person name="De Jong P.J."/>
            <person name="Osoegawa K."/>
            <person name="Zhu B."/>
            <person name="Marra M."/>
            <person name="Schein J."/>
            <person name="Bosdet I."/>
            <person name="Fjell C."/>
            <person name="Jones S."/>
            <person name="Krzywinski M."/>
            <person name="Mathewson C."/>
            <person name="Siddiqui A."/>
            <person name="Wye N."/>
            <person name="McPherson J."/>
            <person name="Zhao S."/>
            <person name="Fraser C.M."/>
            <person name="Shetty J."/>
            <person name="Shatsman S."/>
            <person name="Geer K."/>
            <person name="Chen Y."/>
            <person name="Abramzon S."/>
            <person name="Nierman W.C."/>
            <person name="Havlak P.H."/>
            <person name="Chen R."/>
            <person name="Durbin K.J."/>
            <person name="Egan A."/>
            <person name="Ren Y."/>
            <person name="Song X.-Z."/>
            <person name="Li B."/>
            <person name="Liu Y."/>
            <person name="Qin X."/>
            <person name="Cawley S."/>
            <person name="Cooney A.J."/>
            <person name="D'Souza L.M."/>
            <person name="Martin K."/>
            <person name="Wu J.Q."/>
            <person name="Gonzalez-Garay M.L."/>
            <person name="Jackson A.R."/>
            <person name="Kalafus K.J."/>
            <person name="McLeod M.P."/>
            <person name="Milosavljevic A."/>
            <person name="Virk D."/>
            <person name="Volkov A."/>
            <person name="Wheeler D.A."/>
            <person name="Zhang Z."/>
            <person name="Bailey J.A."/>
            <person name="Eichler E.E."/>
            <person name="Tuzun E."/>
            <person name="Birney E."/>
            <person name="Mongin E."/>
            <person name="Ureta-Vidal A."/>
            <person name="Woodwark C."/>
            <person name="Zdobnov E."/>
            <person name="Bork P."/>
            <person name="Suyama M."/>
            <person name="Torrents D."/>
            <person name="Alexandersson M."/>
            <person name="Trask B.J."/>
            <person name="Young J.M."/>
            <person name="Huang H."/>
            <person name="Wang H."/>
            <person name="Xing H."/>
            <person name="Daniels S."/>
            <person name="Gietzen D."/>
            <person name="Schmidt J."/>
            <person name="Stevens K."/>
            <person name="Vitt U."/>
            <person name="Wingrove J."/>
            <person name="Camara F."/>
            <person name="Mar Alba M."/>
            <person name="Abril J.F."/>
            <person name="Guigo R."/>
            <person name="Smit A."/>
            <person name="Dubchak I."/>
            <person name="Rubin E.M."/>
            <person name="Couronne O."/>
            <person name="Poliakov A."/>
            <person name="Huebner N."/>
            <person name="Ganten D."/>
            <person name="Goesele C."/>
            <person name="Hummel O."/>
            <person name="Kreitler T."/>
            <person name="Lee Y.-A."/>
            <person name="Monti J."/>
            <person name="Schulz H."/>
            <person name="Zimdahl H."/>
            <person name="Himmelbauer H."/>
            <person name="Lehrach H."/>
            <person name="Jacob H.J."/>
            <person name="Bromberg S."/>
            <person name="Gullings-Handley J."/>
            <person name="Jensen-Seaman M.I."/>
            <person name="Kwitek A.E."/>
            <person name="Lazar J."/>
            <person name="Pasko D."/>
            <person name="Tonellato P.J."/>
            <person name="Twigger S."/>
            <person name="Ponting C.P."/>
            <person name="Duarte J.M."/>
            <person name="Rice S."/>
            <person name="Goodstadt L."/>
            <person name="Beatson S.A."/>
            <person name="Emes R.D."/>
            <person name="Winter E.E."/>
            <person name="Webber C."/>
            <person name="Brandt P."/>
            <person name="Nyakatura G."/>
            <person name="Adetobi M."/>
            <person name="Chiaromonte F."/>
            <person name="Elnitski L."/>
            <person name="Eswara P."/>
            <person name="Hardison R.C."/>
            <person name="Hou M."/>
            <person name="Kolbe D."/>
            <person name="Makova K."/>
            <person name="Miller W."/>
            <person name="Nekrutenko A."/>
            <person name="Riemer C."/>
            <person name="Schwartz S."/>
            <person name="Taylor J."/>
            <person name="Yang S."/>
            <person name="Zhang Y."/>
            <person name="Lindpaintner K."/>
            <person name="Andrews T.D."/>
            <person name="Caccamo M."/>
            <person name="Clamp M."/>
            <person name="Clarke L."/>
            <person name="Curwen V."/>
            <person name="Durbin R.M."/>
            <person name="Eyras E."/>
            <person name="Searle S.M."/>
            <person name="Cooper G.M."/>
            <person name="Batzoglou S."/>
            <person name="Brudno M."/>
            <person name="Sidow A."/>
            <person name="Stone E.A."/>
            <person name="Payseur B.A."/>
            <person name="Bourque G."/>
            <person name="Lopez-Otin C."/>
            <person name="Puente X.S."/>
            <person name="Chakrabarti K."/>
            <person name="Chatterji S."/>
            <person name="Dewey C."/>
            <person name="Pachter L."/>
            <person name="Bray N."/>
            <person name="Yap V.B."/>
            <person name="Caspi A."/>
            <person name="Tesler G."/>
            <person name="Pevzner P.A."/>
            <person name="Haussler D."/>
            <person name="Roskin K.M."/>
            <person name="Baertsch R."/>
            <person name="Clawson H."/>
            <person name="Furey T.S."/>
            <person name="Hinrichs A.S."/>
            <person name="Karolchik D."/>
            <person name="Kent W.J."/>
            <person name="Rosenbloom K.R."/>
            <person name="Trumbower H."/>
            <person name="Weirauch M."/>
            <person name="Cooper D.N."/>
            <person name="Stenson P.D."/>
            <person name="Ma B."/>
            <person name="Brent M."/>
            <person name="Arumugam M."/>
            <person name="Shteynberg D."/>
            <person name="Copley R.R."/>
            <person name="Taylor M.S."/>
            <person name="Riethman H."/>
            <person name="Mudunuri U."/>
            <person name="Peterson J."/>
            <person name="Guyer M."/>
            <person name="Felsenfeld A."/>
            <person name="Old S."/>
            <person name="Mockrin S."/>
            <person name="Collins F.S."/>
        </authorList>
    </citation>
    <scope>NUCLEOTIDE SEQUENCE [LARGE SCALE GENOMIC DNA]</scope>
    <source>
        <strain>Brown Norway</strain>
    </source>
</reference>
<reference key="2">
    <citation type="submission" date="2003-04" db="EMBL/GenBank/DDBJ databases">
        <title>Amgen rat EST program.</title>
        <authorList>
            <consortium name="Amgen EST program"/>
        </authorList>
    </citation>
    <scope>NUCLEOTIDE SEQUENCE [LARGE SCALE MRNA] OF 28-331</scope>
    <source>
        <tissue>Hypothalamus</tissue>
        <tissue>Prostate</tissue>
    </source>
</reference>
<reference key="3">
    <citation type="journal article" date="2004" name="Genome Res.">
        <title>The status, quality, and expansion of the NIH full-length cDNA project: the Mammalian Gene Collection (MGC).</title>
        <authorList>
            <consortium name="The MGC Project Team"/>
        </authorList>
    </citation>
    <scope>NUCLEOTIDE SEQUENCE [LARGE SCALE MRNA] OF 351-606</scope>
</reference>
<reference key="4">
    <citation type="journal article" date="2012" name="Nat. Commun.">
        <title>Quantitative maps of protein phosphorylation sites across 14 different rat organs and tissues.</title>
        <authorList>
            <person name="Lundby A."/>
            <person name="Secher A."/>
            <person name="Lage K."/>
            <person name="Nordsborg N.B."/>
            <person name="Dmytriyev A."/>
            <person name="Lundby C."/>
            <person name="Olsen J.V."/>
        </authorList>
    </citation>
    <scope>PHOSPHORYLATION [LARGE SCALE ANALYSIS] AT SER-389 AND SER-439</scope>
    <scope>IDENTIFICATION BY MASS SPECTROMETRY [LARGE SCALE ANALYSIS]</scope>
</reference>
<sequence length="606" mass="67200">MSTASAASSSSSSSASEMIEAPSQVLNFEEIDYKEIEVEEVVGRGAFGVVCKAKWRAKDVAIKQIESESERKAFIVELRQLSRVNHPNIVKLYGACLNPVCLVMEYAEGGSLYNVLHGAEPLPYYTAAHAMSWCLQCSQGVAYLHSMQPKALIHRDLKPPNLLLVAGGTVLKICDFGTACDIQTHMTNNKGSAAWMAPEVFEGSNYSEKCDVFSWGIILWEVITRRKPFDEIGGPAFRIMWAVHNGTRPPLIKNLPKPIESLMTRCWSKDPSQRPSMEEIVKIMTHLMRYFPGADEPLQYPCQYSDEGQSNSATSTGSFMDIASTNTSNKSDTNMEQVPATNDTIKRLESKLLKNQAKQQSDSGRLSLGASRGSSVESLPPTSEGKRMSADMSEIEARIVATTAYTKPKRGHRKTASFGNILDVPEIVISGNGQPRRRSIQDLTVTGTEPGQVSSRSSSPSVRMITTSGPTSEKPARSLPWTPDDSTDTNGSDNSIPMAYLTLDHQLQPLAPCPNSKESMAVFEQHCKMAQEYMKVQTEIALLLQRKQELVAELDQDEKDQQNTSRLVQEHKKLLDENKSLSTYYQQCKKQLEVIRSQQQKRQGTS</sequence>
<keyword id="KW-0053">Apoptosis</keyword>
<keyword id="KW-0067">ATP-binding</keyword>
<keyword id="KW-1003">Cell membrane</keyword>
<keyword id="KW-0963">Cytoplasm</keyword>
<keyword id="KW-1017">Isopeptide bond</keyword>
<keyword id="KW-0418">Kinase</keyword>
<keyword id="KW-0460">Magnesium</keyword>
<keyword id="KW-0472">Membrane</keyword>
<keyword id="KW-0479">Metal-binding</keyword>
<keyword id="KW-0547">Nucleotide-binding</keyword>
<keyword id="KW-0597">Phosphoprotein</keyword>
<keyword id="KW-1185">Reference proteome</keyword>
<keyword id="KW-0723">Serine/threonine-protein kinase</keyword>
<keyword id="KW-0346">Stress response</keyword>
<keyword id="KW-0804">Transcription</keyword>
<keyword id="KW-0805">Transcription regulation</keyword>
<keyword id="KW-0808">Transferase</keyword>
<keyword id="KW-0832">Ubl conjugation</keyword>
<feature type="chain" id="PRO_0000353138" description="Mitogen-activated protein kinase kinase kinase 7">
    <location>
        <begin position="1"/>
        <end position="606"/>
    </location>
</feature>
<feature type="domain" description="Protein kinase" evidence="4">
    <location>
        <begin position="36"/>
        <end position="291"/>
    </location>
</feature>
<feature type="region of interest" description="Interaction with MAPK8IP1" evidence="1">
    <location>
        <begin position="1"/>
        <end position="300"/>
    </location>
</feature>
<feature type="region of interest" description="Disordered" evidence="6">
    <location>
        <begin position="301"/>
        <end position="338"/>
    </location>
</feature>
<feature type="region of interest" description="Disordered" evidence="6">
    <location>
        <begin position="354"/>
        <end position="391"/>
    </location>
</feature>
<feature type="region of interest" description="Disordered" evidence="6">
    <location>
        <begin position="443"/>
        <end position="492"/>
    </location>
</feature>
<feature type="compositionally biased region" description="Polar residues" evidence="6">
    <location>
        <begin position="306"/>
        <end position="338"/>
    </location>
</feature>
<feature type="compositionally biased region" description="Low complexity" evidence="6">
    <location>
        <begin position="361"/>
        <end position="375"/>
    </location>
</feature>
<feature type="compositionally biased region" description="Polar residues" evidence="6">
    <location>
        <begin position="443"/>
        <end position="452"/>
    </location>
</feature>
<feature type="compositionally biased region" description="Low complexity" evidence="6">
    <location>
        <begin position="453"/>
        <end position="463"/>
    </location>
</feature>
<feature type="active site" description="Proton acceptor" evidence="4 5">
    <location>
        <position position="156"/>
    </location>
</feature>
<feature type="binding site" evidence="4">
    <location>
        <begin position="42"/>
        <end position="50"/>
    </location>
    <ligand>
        <name>ATP</name>
        <dbReference type="ChEBI" id="CHEBI:30616"/>
    </ligand>
</feature>
<feature type="binding site">
    <location>
        <position position="63"/>
    </location>
    <ligand>
        <name>ATP</name>
        <dbReference type="ChEBI" id="CHEBI:30616"/>
    </ligand>
</feature>
<feature type="modified residue" description="Phosphothreonine; by autocatalysis" evidence="2">
    <location>
        <position position="184"/>
    </location>
</feature>
<feature type="modified residue" description="Phosphothreonine; by autocatalysis" evidence="2">
    <location>
        <position position="187"/>
    </location>
</feature>
<feature type="modified residue" description="Phosphoserine; by autocatalysis" evidence="2">
    <location>
        <position position="192"/>
    </location>
</feature>
<feature type="modified residue" description="Phosphoserine" evidence="2">
    <location>
        <position position="367"/>
    </location>
</feature>
<feature type="modified residue" description="Phosphoserine" evidence="8">
    <location>
        <position position="389"/>
    </location>
</feature>
<feature type="modified residue" description="Phosphoserine" evidence="8">
    <location>
        <position position="439"/>
    </location>
</feature>
<feature type="modified residue" description="Phosphoserine" evidence="2">
    <location>
        <position position="455"/>
    </location>
</feature>
<feature type="cross-link" description="Glycyl lysine isopeptide (Lys-Gly) (interchain with G-Cter in ubiquitin)" evidence="2">
    <location>
        <position position="72"/>
    </location>
</feature>
<feature type="cross-link" description="Glycyl lysine isopeptide (Lys-Gly) (interchain with G-Cter in ubiquitin)" evidence="3">
    <location>
        <position position="158"/>
    </location>
</feature>
<feature type="cross-link" description="Glycyl lysine isopeptide (Lys-Gly) (interchain with G-Cter in ubiquitin)" evidence="3">
    <location>
        <position position="209"/>
    </location>
</feature>
<proteinExistence type="evidence at protein level"/>
<dbReference type="EC" id="2.7.11.25" evidence="2"/>
<dbReference type="EMBL" id="AABR03040223">
    <property type="status" value="NOT_ANNOTATED_CDS"/>
    <property type="molecule type" value="Genomic_DNA"/>
</dbReference>
<dbReference type="EMBL" id="CB583299">
    <property type="status" value="NOT_ANNOTATED_CDS"/>
    <property type="molecule type" value="mRNA"/>
</dbReference>
<dbReference type="EMBL" id="CB771642">
    <property type="status" value="NOT_ANNOTATED_CDS"/>
    <property type="molecule type" value="mRNA"/>
</dbReference>
<dbReference type="EMBL" id="CK481792">
    <property type="status" value="NOT_ANNOTATED_CDS"/>
    <property type="molecule type" value="mRNA"/>
</dbReference>
<dbReference type="EMBL" id="DN936104">
    <property type="status" value="NOT_ANNOTATED_CDS"/>
    <property type="molecule type" value="mRNA"/>
</dbReference>
<dbReference type="RefSeq" id="NP_001101390.2">
    <property type="nucleotide sequence ID" value="NM_001107920.2"/>
</dbReference>
<dbReference type="RefSeq" id="XP_003750801.1">
    <property type="nucleotide sequence ID" value="XM_003750753.4"/>
</dbReference>
<dbReference type="SMR" id="P0C8E4"/>
<dbReference type="BioGRID" id="260325">
    <property type="interactions" value="6"/>
</dbReference>
<dbReference type="FunCoup" id="P0C8E4">
    <property type="interactions" value="4708"/>
</dbReference>
<dbReference type="IntAct" id="P0C8E4">
    <property type="interactions" value="1"/>
</dbReference>
<dbReference type="STRING" id="10116.ENSRNOP00000007654"/>
<dbReference type="GlyGen" id="P0C8E4">
    <property type="glycosylation" value="2 sites, 1 O-linked glycan (1 site)"/>
</dbReference>
<dbReference type="iPTMnet" id="P0C8E4"/>
<dbReference type="PhosphoSitePlus" id="P0C8E4"/>
<dbReference type="jPOST" id="P0C8E4"/>
<dbReference type="PaxDb" id="10116-ENSRNOP00000007654"/>
<dbReference type="Ensembl" id="ENSRNOT00000007654.6">
    <property type="protein sequence ID" value="ENSRNOP00000007654.4"/>
    <property type="gene ID" value="ENSRNOG00000005724.6"/>
</dbReference>
<dbReference type="GeneID" id="313121"/>
<dbReference type="KEGG" id="rno:313121"/>
<dbReference type="UCSC" id="RGD:1309438">
    <property type="organism name" value="rat"/>
</dbReference>
<dbReference type="AGR" id="RGD:1309438"/>
<dbReference type="CTD" id="6885"/>
<dbReference type="RGD" id="1309438">
    <property type="gene designation" value="Map3k7"/>
</dbReference>
<dbReference type="eggNOG" id="KOG0192">
    <property type="taxonomic scope" value="Eukaryota"/>
</dbReference>
<dbReference type="GeneTree" id="ENSGT00940000157785"/>
<dbReference type="HOGENOM" id="CLU_000288_7_41_1"/>
<dbReference type="InParanoid" id="P0C8E4"/>
<dbReference type="OMA" id="ARTQCFA"/>
<dbReference type="OrthoDB" id="10261027at2759"/>
<dbReference type="PhylomeDB" id="P0C8E4"/>
<dbReference type="TreeFam" id="TF105116"/>
<dbReference type="Reactome" id="R-RNO-168638">
    <property type="pathway name" value="NOD1/2 Signaling Pathway"/>
</dbReference>
<dbReference type="Reactome" id="R-RNO-202424">
    <property type="pathway name" value="Downstream TCR signaling"/>
</dbReference>
<dbReference type="Reactome" id="R-RNO-2871837">
    <property type="pathway name" value="FCERI mediated NF-kB activation"/>
</dbReference>
<dbReference type="Reactome" id="R-RNO-4086398">
    <property type="pathway name" value="Ca2+ pathway"/>
</dbReference>
<dbReference type="Reactome" id="R-RNO-450302">
    <property type="pathway name" value="activated TAK1 mediates p38 MAPK activation"/>
</dbReference>
<dbReference type="Reactome" id="R-RNO-450321">
    <property type="pathway name" value="JNK (c-Jun kinases) phosphorylation and activation mediated by activated human TAK1"/>
</dbReference>
<dbReference type="Reactome" id="R-RNO-5357956">
    <property type="pathway name" value="TNFR1-induced NF-kappa-B signaling pathway"/>
</dbReference>
<dbReference type="Reactome" id="R-RNO-5607764">
    <property type="pathway name" value="CLEC7A (Dectin-1) signaling"/>
</dbReference>
<dbReference type="Reactome" id="R-RNO-5689880">
    <property type="pathway name" value="Ub-specific processing proteases"/>
</dbReference>
<dbReference type="Reactome" id="R-RNO-9020702">
    <property type="pathway name" value="Interleukin-1 signaling"/>
</dbReference>
<dbReference type="Reactome" id="R-RNO-937042">
    <property type="pathway name" value="IRAK2 mediated activation of TAK1 complex"/>
</dbReference>
<dbReference type="Reactome" id="R-RNO-937072">
    <property type="pathway name" value="TRAF6-mediated induction of TAK1 complex within TLR4 complex"/>
</dbReference>
<dbReference type="Reactome" id="R-RNO-9645460">
    <property type="pathway name" value="Alpha-protein kinase 1 signaling pathway"/>
</dbReference>
<dbReference type="Reactome" id="R-RNO-975163">
    <property type="pathway name" value="IRAK2 mediated activation of TAK1 complex upon TLR7/8 or 9 stimulation"/>
</dbReference>
<dbReference type="PRO" id="PR:P0C8E4"/>
<dbReference type="Proteomes" id="UP000002494">
    <property type="component" value="Chromosome 5"/>
</dbReference>
<dbReference type="Bgee" id="ENSRNOG00000005724">
    <property type="expression patterns" value="Expressed in ovary and 19 other cell types or tissues"/>
</dbReference>
<dbReference type="GO" id="GO:0140672">
    <property type="term" value="C:ATAC complex"/>
    <property type="evidence" value="ECO:0000266"/>
    <property type="project" value="RGD"/>
</dbReference>
<dbReference type="GO" id="GO:0005737">
    <property type="term" value="C:cytoplasm"/>
    <property type="evidence" value="ECO:0000266"/>
    <property type="project" value="RGD"/>
</dbReference>
<dbReference type="GO" id="GO:0005829">
    <property type="term" value="C:cytosol"/>
    <property type="evidence" value="ECO:0000266"/>
    <property type="project" value="RGD"/>
</dbReference>
<dbReference type="GO" id="GO:0005886">
    <property type="term" value="C:plasma membrane"/>
    <property type="evidence" value="ECO:0007669"/>
    <property type="project" value="UniProtKB-SubCell"/>
</dbReference>
<dbReference type="GO" id="GO:0014069">
    <property type="term" value="C:postsynaptic density"/>
    <property type="evidence" value="ECO:0000266"/>
    <property type="project" value="RGD"/>
</dbReference>
<dbReference type="GO" id="GO:0005524">
    <property type="term" value="F:ATP binding"/>
    <property type="evidence" value="ECO:0000314"/>
    <property type="project" value="RGD"/>
</dbReference>
<dbReference type="GO" id="GO:0140297">
    <property type="term" value="F:DNA-binding transcription factor binding"/>
    <property type="evidence" value="ECO:0000353"/>
    <property type="project" value="RGD"/>
</dbReference>
<dbReference type="GO" id="GO:0035173">
    <property type="term" value="F:histone kinase activity"/>
    <property type="evidence" value="ECO:0000314"/>
    <property type="project" value="RGD"/>
</dbReference>
<dbReference type="GO" id="GO:0042802">
    <property type="term" value="F:identical protein binding"/>
    <property type="evidence" value="ECO:0000266"/>
    <property type="project" value="RGD"/>
</dbReference>
<dbReference type="GO" id="GO:1990450">
    <property type="term" value="F:linear polyubiquitin binding"/>
    <property type="evidence" value="ECO:0000266"/>
    <property type="project" value="RGD"/>
</dbReference>
<dbReference type="GO" id="GO:0000287">
    <property type="term" value="F:magnesium ion binding"/>
    <property type="evidence" value="ECO:0007669"/>
    <property type="project" value="InterPro"/>
</dbReference>
<dbReference type="GO" id="GO:0004707">
    <property type="term" value="F:MAP kinase activity"/>
    <property type="evidence" value="ECO:0000266"/>
    <property type="project" value="RGD"/>
</dbReference>
<dbReference type="GO" id="GO:0004708">
    <property type="term" value="F:MAP kinase kinase activity"/>
    <property type="evidence" value="ECO:0000266"/>
    <property type="project" value="RGD"/>
</dbReference>
<dbReference type="GO" id="GO:0004709">
    <property type="term" value="F:MAP kinase kinase kinase activity"/>
    <property type="evidence" value="ECO:0000314"/>
    <property type="project" value="RGD"/>
</dbReference>
<dbReference type="GO" id="GO:0008349">
    <property type="term" value="F:MAP kinase kinase kinase kinase activity"/>
    <property type="evidence" value="ECO:0000266"/>
    <property type="project" value="RGD"/>
</dbReference>
<dbReference type="GO" id="GO:0106310">
    <property type="term" value="F:protein serine kinase activity"/>
    <property type="evidence" value="ECO:0007669"/>
    <property type="project" value="RHEA"/>
</dbReference>
<dbReference type="GO" id="GO:0004674">
    <property type="term" value="F:protein serine/threonine kinase activity"/>
    <property type="evidence" value="ECO:0000266"/>
    <property type="project" value="RGD"/>
</dbReference>
<dbReference type="GO" id="GO:0120283">
    <property type="term" value="F:protein serine/threonine kinase binding"/>
    <property type="evidence" value="ECO:0000314"/>
    <property type="project" value="RGD"/>
</dbReference>
<dbReference type="GO" id="GO:0030971">
    <property type="term" value="F:receptor tyrosine kinase binding"/>
    <property type="evidence" value="ECO:0000266"/>
    <property type="project" value="RGD"/>
</dbReference>
<dbReference type="GO" id="GO:0097110">
    <property type="term" value="F:scaffold protein binding"/>
    <property type="evidence" value="ECO:0000266"/>
    <property type="project" value="RGD"/>
</dbReference>
<dbReference type="GO" id="GO:0001223">
    <property type="term" value="F:transcription coactivator binding"/>
    <property type="evidence" value="ECO:0000353"/>
    <property type="project" value="RGD"/>
</dbReference>
<dbReference type="GO" id="GO:0005114">
    <property type="term" value="F:type II transforming growth factor beta receptor binding"/>
    <property type="evidence" value="ECO:0000353"/>
    <property type="project" value="RGD"/>
</dbReference>
<dbReference type="GO" id="GO:0031625">
    <property type="term" value="F:ubiquitin protein ligase binding"/>
    <property type="evidence" value="ECO:0000353"/>
    <property type="project" value="RGD"/>
</dbReference>
<dbReference type="GO" id="GO:0001525">
    <property type="term" value="P:angiogenesis"/>
    <property type="evidence" value="ECO:0000266"/>
    <property type="project" value="RGD"/>
</dbReference>
<dbReference type="GO" id="GO:0043276">
    <property type="term" value="P:anoikis"/>
    <property type="evidence" value="ECO:0000266"/>
    <property type="project" value="RGD"/>
</dbReference>
<dbReference type="GO" id="GO:0097190">
    <property type="term" value="P:apoptotic signaling pathway"/>
    <property type="evidence" value="ECO:0000266"/>
    <property type="project" value="RGD"/>
</dbReference>
<dbReference type="GO" id="GO:0060348">
    <property type="term" value="P:bone development"/>
    <property type="evidence" value="ECO:0000266"/>
    <property type="project" value="RGD"/>
</dbReference>
<dbReference type="GO" id="GO:0007249">
    <property type="term" value="P:canonical NF-kappaB signal transduction"/>
    <property type="evidence" value="ECO:0000266"/>
    <property type="project" value="RGD"/>
</dbReference>
<dbReference type="GO" id="GO:1904385">
    <property type="term" value="P:cellular response to angiotensin"/>
    <property type="evidence" value="ECO:0000314"/>
    <property type="project" value="RGD"/>
</dbReference>
<dbReference type="GO" id="GO:0071456">
    <property type="term" value="P:cellular response to hypoxia"/>
    <property type="evidence" value="ECO:0000270"/>
    <property type="project" value="RGD"/>
</dbReference>
<dbReference type="GO" id="GO:0071560">
    <property type="term" value="P:cellular response to transforming growth factor beta stimulus"/>
    <property type="evidence" value="ECO:0000314"/>
    <property type="project" value="RGD"/>
</dbReference>
<dbReference type="GO" id="GO:0071356">
    <property type="term" value="P:cellular response to tumor necrosis factor"/>
    <property type="evidence" value="ECO:0000314"/>
    <property type="project" value="RGD"/>
</dbReference>
<dbReference type="GO" id="GO:0042742">
    <property type="term" value="P:defense response to bacterium"/>
    <property type="evidence" value="ECO:0000266"/>
    <property type="project" value="RGD"/>
</dbReference>
<dbReference type="GO" id="GO:0007252">
    <property type="term" value="P:I-kappaB phosphorylation"/>
    <property type="evidence" value="ECO:0000250"/>
    <property type="project" value="UniProtKB"/>
</dbReference>
<dbReference type="GO" id="GO:0006955">
    <property type="term" value="P:immune response"/>
    <property type="evidence" value="ECO:0000318"/>
    <property type="project" value="GO_Central"/>
</dbReference>
<dbReference type="GO" id="GO:0006954">
    <property type="term" value="P:inflammatory response"/>
    <property type="evidence" value="ECO:0000266"/>
    <property type="project" value="RGD"/>
</dbReference>
<dbReference type="GO" id="GO:0070498">
    <property type="term" value="P:interleukin-1-mediated signaling pathway"/>
    <property type="evidence" value="ECO:0000266"/>
    <property type="project" value="RGD"/>
</dbReference>
<dbReference type="GO" id="GO:0038173">
    <property type="term" value="P:interleukin-17A-mediated signaling pathway"/>
    <property type="evidence" value="ECO:0000266"/>
    <property type="project" value="RGD"/>
</dbReference>
<dbReference type="GO" id="GO:0038172">
    <property type="term" value="P:interleukin-33-mediated signaling pathway"/>
    <property type="evidence" value="ECO:0000266"/>
    <property type="project" value="RGD"/>
</dbReference>
<dbReference type="GO" id="GO:0007254">
    <property type="term" value="P:JNK cascade"/>
    <property type="evidence" value="ECO:0000250"/>
    <property type="project" value="UniProtKB"/>
</dbReference>
<dbReference type="GO" id="GO:0000165">
    <property type="term" value="P:MAPK cascade"/>
    <property type="evidence" value="ECO:0000314"/>
    <property type="project" value="RGD"/>
</dbReference>
<dbReference type="GO" id="GO:2001234">
    <property type="term" value="P:negative regulation of apoptotic signaling pathway"/>
    <property type="evidence" value="ECO:0000266"/>
    <property type="project" value="RGD"/>
</dbReference>
<dbReference type="GO" id="GO:0010629">
    <property type="term" value="P:negative regulation of gene expression"/>
    <property type="evidence" value="ECO:0000315"/>
    <property type="project" value="RGD"/>
</dbReference>
<dbReference type="GO" id="GO:0060546">
    <property type="term" value="P:negative regulation of necroptotic process"/>
    <property type="evidence" value="ECO:0000266"/>
    <property type="project" value="RGD"/>
</dbReference>
<dbReference type="GO" id="GO:2000378">
    <property type="term" value="P:negative regulation of reactive oxygen species metabolic process"/>
    <property type="evidence" value="ECO:0000266"/>
    <property type="project" value="RGD"/>
</dbReference>
<dbReference type="GO" id="GO:1902443">
    <property type="term" value="P:negative regulation of ripoptosome assembly involved in necroptotic process"/>
    <property type="evidence" value="ECO:0000266"/>
    <property type="project" value="RGD"/>
</dbReference>
<dbReference type="GO" id="GO:0001841">
    <property type="term" value="P:neural tube formation"/>
    <property type="evidence" value="ECO:0000266"/>
    <property type="project" value="RGD"/>
</dbReference>
<dbReference type="GO" id="GO:0001649">
    <property type="term" value="P:osteoblast differentiation"/>
    <property type="evidence" value="ECO:0000266"/>
    <property type="project" value="RGD"/>
</dbReference>
<dbReference type="GO" id="GO:0038066">
    <property type="term" value="P:p38MAPK cascade"/>
    <property type="evidence" value="ECO:0000266"/>
    <property type="project" value="RGD"/>
</dbReference>
<dbReference type="GO" id="GO:0010508">
    <property type="term" value="P:positive regulation of autophagy"/>
    <property type="evidence" value="ECO:0000315"/>
    <property type="project" value="RGD"/>
</dbReference>
<dbReference type="GO" id="GO:0043123">
    <property type="term" value="P:positive regulation of canonical NF-kappaB signal transduction"/>
    <property type="evidence" value="ECO:0000315"/>
    <property type="project" value="RGD"/>
</dbReference>
<dbReference type="GO" id="GO:0045787">
    <property type="term" value="P:positive regulation of cell cycle"/>
    <property type="evidence" value="ECO:0000315"/>
    <property type="project" value="RGD"/>
</dbReference>
<dbReference type="GO" id="GO:0045793">
    <property type="term" value="P:positive regulation of cell size"/>
    <property type="evidence" value="ECO:0000315"/>
    <property type="project" value="RGD"/>
</dbReference>
<dbReference type="GO" id="GO:0032743">
    <property type="term" value="P:positive regulation of interleukin-2 production"/>
    <property type="evidence" value="ECO:0000266"/>
    <property type="project" value="RGD"/>
</dbReference>
<dbReference type="GO" id="GO:0046330">
    <property type="term" value="P:positive regulation of JNK cascade"/>
    <property type="evidence" value="ECO:0000266"/>
    <property type="project" value="RGD"/>
</dbReference>
<dbReference type="GO" id="GO:0043507">
    <property type="term" value="P:positive regulation of JUN kinase activity"/>
    <property type="evidence" value="ECO:0000250"/>
    <property type="project" value="UniProtKB"/>
</dbReference>
<dbReference type="GO" id="GO:0016239">
    <property type="term" value="P:positive regulation of macroautophagy"/>
    <property type="evidence" value="ECO:0000266"/>
    <property type="project" value="RGD"/>
</dbReference>
<dbReference type="GO" id="GO:0043410">
    <property type="term" value="P:positive regulation of MAPK cascade"/>
    <property type="evidence" value="ECO:0000314"/>
    <property type="project" value="RGD"/>
</dbReference>
<dbReference type="GO" id="GO:1901224">
    <property type="term" value="P:positive regulation of non-canonical NF-kappaB signal transduction"/>
    <property type="evidence" value="ECO:0000266"/>
    <property type="project" value="RGD"/>
</dbReference>
<dbReference type="GO" id="GO:0002726">
    <property type="term" value="P:positive regulation of T cell cytokine production"/>
    <property type="evidence" value="ECO:0000266"/>
    <property type="project" value="RGD"/>
</dbReference>
<dbReference type="GO" id="GO:1904754">
    <property type="term" value="P:positive regulation of vascular associated smooth muscle cell migration"/>
    <property type="evidence" value="ECO:0000315"/>
    <property type="project" value="RGD"/>
</dbReference>
<dbReference type="GO" id="GO:1904707">
    <property type="term" value="P:positive regulation of vascular associated smooth muscle cell proliferation"/>
    <property type="evidence" value="ECO:0000315"/>
    <property type="project" value="RGD"/>
</dbReference>
<dbReference type="GO" id="GO:2000377">
    <property type="term" value="P:regulation of reactive oxygen species metabolic process"/>
    <property type="evidence" value="ECO:0000266"/>
    <property type="project" value="RGD"/>
</dbReference>
<dbReference type="GO" id="GO:1990776">
    <property type="term" value="P:response to angiotensin"/>
    <property type="evidence" value="ECO:0000270"/>
    <property type="project" value="RGD"/>
</dbReference>
<dbReference type="GO" id="GO:0001666">
    <property type="term" value="P:response to hypoxia"/>
    <property type="evidence" value="ECO:0000270"/>
    <property type="project" value="RGD"/>
</dbReference>
<dbReference type="GO" id="GO:0051403">
    <property type="term" value="P:stress-activated MAPK cascade"/>
    <property type="evidence" value="ECO:0000266"/>
    <property type="project" value="RGD"/>
</dbReference>
<dbReference type="GO" id="GO:0034142">
    <property type="term" value="P:toll-like receptor 4 signaling pathway"/>
    <property type="evidence" value="ECO:0000266"/>
    <property type="project" value="RGD"/>
</dbReference>
<dbReference type="GO" id="GO:0007179">
    <property type="term" value="P:transforming growth factor beta receptor signaling pathway"/>
    <property type="evidence" value="ECO:0000266"/>
    <property type="project" value="RGD"/>
</dbReference>
<dbReference type="CDD" id="cd14058">
    <property type="entry name" value="STKc_TAK1"/>
    <property type="match status" value="1"/>
</dbReference>
<dbReference type="FunFam" id="1.10.510.10:FF:000143">
    <property type="entry name" value="Mitogen-activated protein kinase kinase kinase 7"/>
    <property type="match status" value="1"/>
</dbReference>
<dbReference type="FunFam" id="3.30.200.20:FF:000152">
    <property type="entry name" value="Mitogen-activated protein kinase kinase kinase 7"/>
    <property type="match status" value="1"/>
</dbReference>
<dbReference type="Gene3D" id="3.30.200.20">
    <property type="entry name" value="Phosphorylase Kinase, domain 1"/>
    <property type="match status" value="1"/>
</dbReference>
<dbReference type="Gene3D" id="1.10.510.10">
    <property type="entry name" value="Transferase(Phosphotransferase) domain 1"/>
    <property type="match status" value="1"/>
</dbReference>
<dbReference type="InterPro" id="IPR011009">
    <property type="entry name" value="Kinase-like_dom_sf"/>
</dbReference>
<dbReference type="InterPro" id="IPR049637">
    <property type="entry name" value="MAP3K7"/>
</dbReference>
<dbReference type="InterPro" id="IPR000719">
    <property type="entry name" value="Prot_kinase_dom"/>
</dbReference>
<dbReference type="InterPro" id="IPR017441">
    <property type="entry name" value="Protein_kinase_ATP_BS"/>
</dbReference>
<dbReference type="InterPro" id="IPR001245">
    <property type="entry name" value="Ser-Thr/Tyr_kinase_cat_dom"/>
</dbReference>
<dbReference type="InterPro" id="IPR008271">
    <property type="entry name" value="Ser/Thr_kinase_AS"/>
</dbReference>
<dbReference type="PANTHER" id="PTHR46716">
    <property type="entry name" value="MITOGEN-ACTIVATED PROTEIN KINASE KINASE KINASE 7"/>
    <property type="match status" value="1"/>
</dbReference>
<dbReference type="PANTHER" id="PTHR46716:SF1">
    <property type="entry name" value="MITOGEN-ACTIVATED PROTEIN KINASE KINASE KINASE 7"/>
    <property type="match status" value="1"/>
</dbReference>
<dbReference type="Pfam" id="PF07714">
    <property type="entry name" value="PK_Tyr_Ser-Thr"/>
    <property type="match status" value="1"/>
</dbReference>
<dbReference type="PIRSF" id="PIRSF038168">
    <property type="entry name" value="MAPKKK7"/>
    <property type="match status" value="1"/>
</dbReference>
<dbReference type="PRINTS" id="PR00109">
    <property type="entry name" value="TYRKINASE"/>
</dbReference>
<dbReference type="SMART" id="SM00220">
    <property type="entry name" value="S_TKc"/>
    <property type="match status" value="1"/>
</dbReference>
<dbReference type="SUPFAM" id="SSF56112">
    <property type="entry name" value="Protein kinase-like (PK-like)"/>
    <property type="match status" value="1"/>
</dbReference>
<dbReference type="PROSITE" id="PS00107">
    <property type="entry name" value="PROTEIN_KINASE_ATP"/>
    <property type="match status" value="1"/>
</dbReference>
<dbReference type="PROSITE" id="PS50011">
    <property type="entry name" value="PROTEIN_KINASE_DOM"/>
    <property type="match status" value="1"/>
</dbReference>
<dbReference type="PROSITE" id="PS00108">
    <property type="entry name" value="PROTEIN_KINASE_ST"/>
    <property type="match status" value="1"/>
</dbReference>
<evidence type="ECO:0000250" key="1"/>
<evidence type="ECO:0000250" key="2">
    <source>
        <dbReference type="UniProtKB" id="O43318"/>
    </source>
</evidence>
<evidence type="ECO:0000250" key="3">
    <source>
        <dbReference type="UniProtKB" id="Q62073"/>
    </source>
</evidence>
<evidence type="ECO:0000255" key="4">
    <source>
        <dbReference type="PROSITE-ProRule" id="PRU00159"/>
    </source>
</evidence>
<evidence type="ECO:0000255" key="5">
    <source>
        <dbReference type="PROSITE-ProRule" id="PRU10027"/>
    </source>
</evidence>
<evidence type="ECO:0000256" key="6">
    <source>
        <dbReference type="SAM" id="MobiDB-lite"/>
    </source>
</evidence>
<evidence type="ECO:0000305" key="7"/>
<evidence type="ECO:0007744" key="8">
    <source>
    </source>
</evidence>
<comment type="function">
    <text evidence="2 3">Serine/threonine kinase which acts as an essential component of the MAP kinase signal transduction pathway. Plays an important role in the cascades of cellular responses evoked by changes in the environment. Mediates signal transduction of TRAF6, various cytokines including interleukin-1 (IL-1), transforming growth factor-beta (TGFB), TGFB-related factors like BMP2 and BMP4, toll-like receptors (TLR), tumor necrosis factor receptor CD40 and B-cell receptor (BCR). Once activated, acts as an upstream activator of the MKK/JNK signal transduction cascade and the p38 MAPK signal transduction cascade through the phosphorylation and activation of several MAP kinase kinases like MAP2K1/MEK1, MAP2K3/MKK3, MAP2K6/MKK6 and MAP2K7/MKK7. These MAP2Ks in turn activate p38 MAPKs and c-jun N-terminal kinases (JNKs); both p38 MAPK and JNK pathways control the transcription factors activator protein-1 (AP-1). Independently of MAP2Ks and p38 MAPKs, acts as a key activator of NF-kappa-B by promoting activation of the I-kappa-B-kinase (IKK) core complex. Mechanistically, recruited to polyubiquitin chains of RIPK2 and IKBKG/NEMO via TAB2/MAP3K7IP2 and TAB3/MAP3K7IP3, and catalyzes phosphorylation and activation of IKBKB/IKKB component of the IKK complex, leading to NF-kappa-B activation. In osmotic stress signaling, plays a major role in the activation of MAPK8/JNK1, but not that of NF-kappa-B. Promotes TRIM5 capsid-specific restriction activity. Phosphorylates RIPK1 at 'Ser-321' which positively regulates RIPK1 interaction with RIPK3 to promote necroptosis but negatively regulates RIPK1 kinase activity and its interaction with FADD to mediate apoptosis. Phosphorylates STING1 in response to cGAMP-activation, promoting association between STEEP1 and STING1 and STING1 translocation to COPII vesicles.</text>
</comment>
<comment type="catalytic activity">
    <reaction evidence="2">
        <text>L-seryl-[protein] + ATP = O-phospho-L-seryl-[protein] + ADP + H(+)</text>
        <dbReference type="Rhea" id="RHEA:17989"/>
        <dbReference type="Rhea" id="RHEA-COMP:9863"/>
        <dbReference type="Rhea" id="RHEA-COMP:11604"/>
        <dbReference type="ChEBI" id="CHEBI:15378"/>
        <dbReference type="ChEBI" id="CHEBI:29999"/>
        <dbReference type="ChEBI" id="CHEBI:30616"/>
        <dbReference type="ChEBI" id="CHEBI:83421"/>
        <dbReference type="ChEBI" id="CHEBI:456216"/>
        <dbReference type="EC" id="2.7.11.25"/>
    </reaction>
</comment>
<comment type="catalytic activity">
    <reaction evidence="2">
        <text>L-threonyl-[protein] + ATP = O-phospho-L-threonyl-[protein] + ADP + H(+)</text>
        <dbReference type="Rhea" id="RHEA:46608"/>
        <dbReference type="Rhea" id="RHEA-COMP:11060"/>
        <dbReference type="Rhea" id="RHEA-COMP:11605"/>
        <dbReference type="ChEBI" id="CHEBI:15378"/>
        <dbReference type="ChEBI" id="CHEBI:30013"/>
        <dbReference type="ChEBI" id="CHEBI:30616"/>
        <dbReference type="ChEBI" id="CHEBI:61977"/>
        <dbReference type="ChEBI" id="CHEBI:456216"/>
        <dbReference type="EC" id="2.7.11.25"/>
    </reaction>
</comment>
<comment type="cofactor">
    <cofactor evidence="2">
        <name>Mg(2+)</name>
        <dbReference type="ChEBI" id="CHEBI:18420"/>
    </cofactor>
</comment>
<comment type="activity regulation">
    <text evidence="2">Activated by pro-inflammatory cytokines and in response to physical and chemical stresses, including osmotic stress, oxidative stress, arsenic and ultraviolet light irradiation. Activated by 'Lys-63'-linked polyubiquitination and by autophosphorylation. Association with TAB1/MAP3K7IP1 and TAB2/MAP3K7IP2 promotes activation through autophosphorylation, whereas PPM1B/PP2CB, PP2A and PPP6C dephosphorylation leads to inactivation. Ceramides are also able to activate MAP3K7/TAK1.</text>
</comment>
<comment type="subunit">
    <text evidence="2 3">Can form homodimer. Binds both upstream activators and downstream substrates in multimolecular complexes. Interacts with TAB1/MAP3K7IP1, TAB2/MAP3K7IP2 and TAB3/MAP3K7IP3. Identified in the TRIKA2 complex composed of MAP3K7/TAK1, TAB1/MAP3K7IP1 and TAB2/MAP3K7IP2. Interacts with PPM1L and PPM1B/PP2CB. Interaction with PP2A and PPP6C leads to its repressed activity. Interacts with TRAF6 and TAB1/MAP3K7IP1; during IL-1 signaling. Interacts with TAOK1 and TAOK2; interaction with TAOK2 interferes with MAP3K7 interaction with IKKA, thus preventing NF-kappa-B activation. Interacts with DYNC2I2 (via WD domains). Interacts with CYLD and RBCK1. Interacts with TGFBR1; induces MAP3K7/TAK1 activation by TRAF6. Interacts with MAPK8IP1 and SMAD6. Interacts with isoform 1 of VRK2. Interacts with DAB2; the interaction is induced by TGF-beta stimulation and may mediate TGF-beta stimulated JNK activation. Interacts with TRIM5. Part of a complex containing ITCH, NDFIP1 and MAP3K7. Interacts with PLEKHM1 (via N- and C-terminus). Found in a complex with SH3RF1, RAC2, MAP2K7/MKK7, MAPK8IP1/JIP1, MAPK8/JNK1 and MAPK9/JNK2. Interacts with SASH1 (By similarity). Interacts with RIPK1 (By similarity).</text>
</comment>
<comment type="subcellular location">
    <subcellularLocation>
        <location evidence="1">Cytoplasm</location>
    </subcellularLocation>
    <subcellularLocation>
        <location evidence="1">Cell membrane</location>
        <topology evidence="1">Peripheral membrane protein</topology>
        <orientation evidence="1">Cytoplasmic side</orientation>
    </subcellularLocation>
    <text evidence="1">Although the majority of MAP3K7/TAK1 is found in the cytosol, when complexed with TAB1/MAP3K7IP1 and TAB2/MAP3K7IP2, it is also localized at the cell membrane.</text>
</comment>
<comment type="PTM">
    <text evidence="2 3">Association with TAB1/MAP3K7IP1 promotes autophosphorylation at Ser-192 and subsequent activation. Association with TAB2/MAP3K7IP2, itself associated with free unanchored Lys-63 polyubiquitin chain, promotes autophosphorylation and subsequent activation of MAP3K7. Dephosphorylation at Ser-192 by PPM1B/PP2CB and at Thr-187 by PP2A and PPP6C leads to inactivation (By similarity). Deubiquitinated by USP19; leading to negative regulation of TNF-alpha- and IL-1beta-triggered NF-kappa-B activation (By similarity).</text>
</comment>
<comment type="PTM">
    <text evidence="2 3">'Lys-48'-linked polyubiquitination at Lys-72 is induced by TNFalpha, and leads to proteasomal degradation. Undergoes 'Lys-48'-linked polyubiquitination catalyzed by ITCH. 'Lys-63'-linked polyubiquitination at Lys-158 by TRIM8 does not lead to proteasomal degradation but contributes to autophosphorylation and activation. Deubiquitinated by CYLD, a protease that selectively cleaves 'Lys-63'-linked ubiquitin chains.</text>
</comment>
<comment type="similarity">
    <text evidence="7">Belongs to the protein kinase superfamily. STE Ser/Thr protein kinase family. MAP kinase kinase kinase subfamily.</text>
</comment>
<organism>
    <name type="scientific">Rattus norvegicus</name>
    <name type="common">Rat</name>
    <dbReference type="NCBI Taxonomy" id="10116"/>
    <lineage>
        <taxon>Eukaryota</taxon>
        <taxon>Metazoa</taxon>
        <taxon>Chordata</taxon>
        <taxon>Craniata</taxon>
        <taxon>Vertebrata</taxon>
        <taxon>Euteleostomi</taxon>
        <taxon>Mammalia</taxon>
        <taxon>Eutheria</taxon>
        <taxon>Euarchontoglires</taxon>
        <taxon>Glires</taxon>
        <taxon>Rodentia</taxon>
        <taxon>Myomorpha</taxon>
        <taxon>Muroidea</taxon>
        <taxon>Muridae</taxon>
        <taxon>Murinae</taxon>
        <taxon>Rattus</taxon>
    </lineage>
</organism>